<feature type="signal peptide" evidence="1">
    <location>
        <begin position="1"/>
        <end position="20"/>
    </location>
</feature>
<feature type="chain" id="PRO_0000446845" description="Scoloptoxin SSD43" evidence="1">
    <location>
        <begin position="21"/>
        <end position="211"/>
    </location>
</feature>
<accession>P0DPU2</accession>
<name>VA543_SCODE</name>
<organism>
    <name type="scientific">Scolopendra dehaani</name>
    <name type="common">Thai centipede</name>
    <name type="synonym">Scolopendra subspinipes dehaani</name>
    <dbReference type="NCBI Taxonomy" id="2609776"/>
    <lineage>
        <taxon>Eukaryota</taxon>
        <taxon>Metazoa</taxon>
        <taxon>Ecdysozoa</taxon>
        <taxon>Arthropoda</taxon>
        <taxon>Myriapoda</taxon>
        <taxon>Chilopoda</taxon>
        <taxon>Pleurostigmophora</taxon>
        <taxon>Scolopendromorpha</taxon>
        <taxon>Scolopendridae</taxon>
        <taxon>Scolopendra</taxon>
    </lineage>
</organism>
<reference key="1">
    <citation type="journal article" date="2012" name="J. Proteome Res.">
        <title>Venomic and transcriptomic analysis of centipede Scolopendra subspinipes dehaani.</title>
        <authorList>
            <person name="Liu Z.C."/>
            <person name="Zhang R."/>
            <person name="Zhao F."/>
            <person name="Chen Z.M."/>
            <person name="Liu H.W."/>
            <person name="Wang Y.J."/>
            <person name="Jiang P."/>
            <person name="Zhang Y."/>
            <person name="Wu Y."/>
            <person name="Ding J.P."/>
            <person name="Lee W.H."/>
            <person name="Zhang Y."/>
        </authorList>
    </citation>
    <scope>NUCLEOTIDE SEQUENCE [MRNA]</scope>
    <scope>PROTEIN SEQUENCE OF 21-46</scope>
    <scope>SUBCELLULAR LOCATION</scope>
    <scope>MASS SPECTROMETRY</scope>
    <scope>FUNCTION</scope>
    <source>
        <tissue>Venom</tissue>
        <tissue>Venom gland</tissue>
    </source>
</reference>
<evidence type="ECO:0000269" key="1">
    <source>
    </source>
</evidence>
<evidence type="ECO:0000303" key="2">
    <source>
    </source>
</evidence>
<evidence type="ECO:0000305" key="3"/>
<evidence type="ECO:0000305" key="4">
    <source>
    </source>
</evidence>
<protein>
    <recommendedName>
        <fullName evidence="2">Scoloptoxin SSD43</fullName>
    </recommendedName>
    <alternativeName>
        <fullName evidence="3">Cysteine-rich venom protein</fullName>
        <shortName evidence="3">CRVP</shortName>
    </alternativeName>
</protein>
<proteinExistence type="evidence at protein level"/>
<comment type="function">
    <text evidence="1">Shows trypsin inhibiting activity. The protein is highly thermally stable, since its incubation in boiling water during 10 minutes does not reduce its activity.</text>
</comment>
<comment type="subcellular location">
    <subcellularLocation>
        <location evidence="1">Secreted</location>
    </subcellularLocation>
</comment>
<comment type="tissue specificity">
    <text evidence="4">Expressed by the venom gland.</text>
</comment>
<comment type="PTM">
    <text evidence="3">Contains 3 disulfide bonds.</text>
</comment>
<comment type="mass spectrometry"/>
<comment type="similarity">
    <text evidence="3">Belongs to the CRISP family. Venom allergen 5-like subfamily.</text>
</comment>
<keyword id="KW-0903">Direct protein sequencing</keyword>
<keyword id="KW-1015">Disulfide bond</keyword>
<keyword id="KW-0646">Protease inhibitor</keyword>
<keyword id="KW-0964">Secreted</keyword>
<keyword id="KW-0722">Serine protease inhibitor</keyword>
<keyword id="KW-0732">Signal</keyword>
<dbReference type="EMBL" id="KC144061">
    <property type="status" value="NOT_ANNOTATED_CDS"/>
    <property type="molecule type" value="mRNA"/>
</dbReference>
<dbReference type="SMR" id="P0DPU2"/>
<dbReference type="GO" id="GO:0005576">
    <property type="term" value="C:extracellular region"/>
    <property type="evidence" value="ECO:0007669"/>
    <property type="project" value="UniProtKB-SubCell"/>
</dbReference>
<dbReference type="GO" id="GO:0004867">
    <property type="term" value="F:serine-type endopeptidase inhibitor activity"/>
    <property type="evidence" value="ECO:0007669"/>
    <property type="project" value="UniProtKB-KW"/>
</dbReference>
<dbReference type="CDD" id="cd05380">
    <property type="entry name" value="CAP_euk"/>
    <property type="match status" value="1"/>
</dbReference>
<dbReference type="Gene3D" id="3.40.33.10">
    <property type="entry name" value="CAP"/>
    <property type="match status" value="1"/>
</dbReference>
<dbReference type="InterPro" id="IPR014044">
    <property type="entry name" value="CAP_dom"/>
</dbReference>
<dbReference type="InterPro" id="IPR035940">
    <property type="entry name" value="CAP_sf"/>
</dbReference>
<dbReference type="InterPro" id="IPR001283">
    <property type="entry name" value="CRISP-related"/>
</dbReference>
<dbReference type="InterPro" id="IPR002413">
    <property type="entry name" value="V5_allergen-like"/>
</dbReference>
<dbReference type="PANTHER" id="PTHR10334">
    <property type="entry name" value="CYSTEINE-RICH SECRETORY PROTEIN-RELATED"/>
    <property type="match status" value="1"/>
</dbReference>
<dbReference type="Pfam" id="PF00188">
    <property type="entry name" value="CAP"/>
    <property type="match status" value="1"/>
</dbReference>
<dbReference type="PRINTS" id="PR00838">
    <property type="entry name" value="V5ALLERGEN"/>
</dbReference>
<dbReference type="PRINTS" id="PR00837">
    <property type="entry name" value="V5TPXLIKE"/>
</dbReference>
<dbReference type="SMART" id="SM00198">
    <property type="entry name" value="SCP"/>
    <property type="match status" value="1"/>
</dbReference>
<dbReference type="SUPFAM" id="SSF55797">
    <property type="entry name" value="PR-1-like"/>
    <property type="match status" value="1"/>
</dbReference>
<sequence>MNFVIYGVIVVLTSQLYVDGWGCQMSERGLDKKMKNKILKHHNELRQKVANGQERGQPTASNMKQLRWNDELAANAQRAAERCIFQHTSDEGRKTTKYGVAGESMYAGTFSNPLKTAVDMWYEEVRDVNPSILDSYDYYPGAVIGHYIQLVWAETEAIGCGYAKSAADGESYVFCHYAPHGLFPQQSVYKRGSPASACKKGQSSRYPGLCK</sequence>